<keyword id="KW-0007">Acetylation</keyword>
<keyword id="KW-0106">Calcium</keyword>
<keyword id="KW-1003">Cell membrane</keyword>
<keyword id="KW-0963">Cytoplasm</keyword>
<keyword id="KW-0472">Membrane</keyword>
<keyword id="KW-0479">Metal-binding</keyword>
<keyword id="KW-0597">Phosphoprotein</keyword>
<keyword id="KW-1185">Reference proteome</keyword>
<keyword id="KW-0677">Repeat</keyword>
<gene>
    <name type="primary">CAPNS1</name>
    <name type="synonym">CAPN4</name>
</gene>
<protein>
    <recommendedName>
        <fullName>Calpain small subunit 1</fullName>
        <shortName>CSS1</shortName>
    </recommendedName>
    <alternativeName>
        <fullName>Calcium-activated neutral proteinase small subunit</fullName>
        <shortName>CANP small subunit</shortName>
    </alternativeName>
    <alternativeName>
        <fullName>Calcium-dependent protease small subunit</fullName>
        <shortName>CDPS</shortName>
    </alternativeName>
    <alternativeName>
        <fullName>Calcium-dependent protease small subunit 1</fullName>
    </alternativeName>
    <alternativeName>
        <fullName>Calpain regulatory subunit</fullName>
    </alternativeName>
</protein>
<reference key="1">
    <citation type="journal article" date="1989" name="J. Biol. Chem.">
        <title>Identification of major autolytic cleavage sites in the regulatory subunit of vascular calpain II. A comparison of partial amino-terminal sequences to deduced sequence from complementary DNA.</title>
        <authorList>
            <person name="McClelland P."/>
            <person name="Lash J.A."/>
            <person name="Hathaway D.R."/>
        </authorList>
    </citation>
    <scope>NUCLEOTIDE SEQUENCE [MRNA]</scope>
</reference>
<reference key="2">
    <citation type="submission" date="2006-11" db="EMBL/GenBank/DDBJ databases">
        <title>A novel RFLP/MboII polymorphism of the small subunit bovine calcium-activated protease (CAPNS1) and its association with carcass and meat quality traits of Polish-Black-and-White cattle.</title>
        <authorList>
            <person name="Juszczuk-Kubiak E."/>
            <person name="Rosochacki S."/>
            <person name="Wycinska K."/>
        </authorList>
    </citation>
    <scope>NUCLEOTIDE SEQUENCE [GENOMIC DNA]</scope>
</reference>
<reference key="3">
    <citation type="submission" date="2006-05" db="EMBL/GenBank/DDBJ databases">
        <authorList>
            <consortium name="NIH - Mammalian Gene Collection (MGC) project"/>
        </authorList>
    </citation>
    <scope>NUCLEOTIDE SEQUENCE [LARGE SCALE MRNA]</scope>
    <source>
        <strain>Hereford</strain>
        <tissue>Ascending colon</tissue>
    </source>
</reference>
<accession>P13135</accession>
<accession>A1YVU9</accession>
<accession>Q1JQC3</accession>
<dbReference type="EMBL" id="J05065">
    <property type="protein sequence ID" value="AAA30422.1"/>
    <property type="molecule type" value="mRNA"/>
</dbReference>
<dbReference type="EMBL" id="EF139087">
    <property type="protein sequence ID" value="ABL75413.1"/>
    <property type="molecule type" value="Genomic_DNA"/>
</dbReference>
<dbReference type="EMBL" id="BC116060">
    <property type="protein sequence ID" value="AAI16061.1"/>
    <property type="molecule type" value="mRNA"/>
</dbReference>
<dbReference type="PIR" id="A34466">
    <property type="entry name" value="A34466"/>
</dbReference>
<dbReference type="RefSeq" id="NP_776686.1">
    <property type="nucleotide sequence ID" value="NM_174261.1"/>
</dbReference>
<dbReference type="SMR" id="P13135"/>
<dbReference type="CORUM" id="P13135"/>
<dbReference type="FunCoup" id="P13135">
    <property type="interactions" value="1252"/>
</dbReference>
<dbReference type="STRING" id="9913.ENSBTAP00000070211"/>
<dbReference type="PaxDb" id="9913-ENSBTAP00000019803"/>
<dbReference type="PeptideAtlas" id="P13135"/>
<dbReference type="GeneID" id="281664"/>
<dbReference type="KEGG" id="bta:281664"/>
<dbReference type="CTD" id="826"/>
<dbReference type="VEuPathDB" id="HostDB:ENSBTAG00000014872"/>
<dbReference type="eggNOG" id="KOG0037">
    <property type="taxonomic scope" value="Eukaryota"/>
</dbReference>
<dbReference type="HOGENOM" id="CLU_051357_2_0_1"/>
<dbReference type="InParanoid" id="P13135"/>
<dbReference type="OrthoDB" id="186625at2759"/>
<dbReference type="TreeFam" id="TF314682"/>
<dbReference type="BRENDA" id="3.4.22.B24">
    <property type="organism ID" value="908"/>
</dbReference>
<dbReference type="Reactome" id="R-BTA-1474228">
    <property type="pathway name" value="Degradation of the extracellular matrix"/>
</dbReference>
<dbReference type="Reactome" id="R-BTA-9856530">
    <property type="pathway name" value="High laminar flow shear stress activates signaling by PIEZO1 and PECAM1:CDH5:KDR in endothelial cells"/>
</dbReference>
<dbReference type="Reactome" id="R-BTA-9860927">
    <property type="pathway name" value="Turbulent (oscillatory, disturbed) flow shear stress activates signaling by PIEZO1 and integrins in endothelial cells"/>
</dbReference>
<dbReference type="Proteomes" id="UP000009136">
    <property type="component" value="Chromosome 18"/>
</dbReference>
<dbReference type="Bgee" id="ENSBTAG00000014872">
    <property type="expression patterns" value="Expressed in spermatocyte and 105 other cell types or tissues"/>
</dbReference>
<dbReference type="GO" id="GO:0110158">
    <property type="term" value="C:calpain complex"/>
    <property type="evidence" value="ECO:0000318"/>
    <property type="project" value="GO_Central"/>
</dbReference>
<dbReference type="GO" id="GO:0005886">
    <property type="term" value="C:plasma membrane"/>
    <property type="evidence" value="ECO:0007669"/>
    <property type="project" value="UniProtKB-SubCell"/>
</dbReference>
<dbReference type="GO" id="GO:0005509">
    <property type="term" value="F:calcium ion binding"/>
    <property type="evidence" value="ECO:0007669"/>
    <property type="project" value="InterPro"/>
</dbReference>
<dbReference type="GO" id="GO:0004198">
    <property type="term" value="F:calcium-dependent cysteine-type endopeptidase activity"/>
    <property type="evidence" value="ECO:0000250"/>
    <property type="project" value="AgBase"/>
</dbReference>
<dbReference type="CDD" id="cd16188">
    <property type="entry name" value="EFh_PEF_CPNS1_2"/>
    <property type="match status" value="1"/>
</dbReference>
<dbReference type="FunFam" id="1.10.238.10:FF:000136">
    <property type="entry name" value="Calpain small subunit 1"/>
    <property type="match status" value="1"/>
</dbReference>
<dbReference type="Gene3D" id="1.10.238.10">
    <property type="entry name" value="EF-hand"/>
    <property type="match status" value="1"/>
</dbReference>
<dbReference type="InterPro" id="IPR011992">
    <property type="entry name" value="EF-hand-dom_pair"/>
</dbReference>
<dbReference type="InterPro" id="IPR018247">
    <property type="entry name" value="EF_Hand_1_Ca_BS"/>
</dbReference>
<dbReference type="InterPro" id="IPR002048">
    <property type="entry name" value="EF_hand_dom"/>
</dbReference>
<dbReference type="PANTHER" id="PTHR46735:SF3">
    <property type="entry name" value="CALPAIN SMALL SUBUNIT 1-RELATED"/>
    <property type="match status" value="1"/>
</dbReference>
<dbReference type="PANTHER" id="PTHR46735">
    <property type="entry name" value="CALPAIN, SMALL SUBUNIT 1 A-RELATED"/>
    <property type="match status" value="1"/>
</dbReference>
<dbReference type="SUPFAM" id="SSF47473">
    <property type="entry name" value="EF-hand"/>
    <property type="match status" value="1"/>
</dbReference>
<dbReference type="PROSITE" id="PS00018">
    <property type="entry name" value="EF_HAND_1"/>
    <property type="match status" value="2"/>
</dbReference>
<dbReference type="PROSITE" id="PS50222">
    <property type="entry name" value="EF_HAND_2"/>
    <property type="match status" value="3"/>
</dbReference>
<comment type="function">
    <text evidence="2">Regulatory subunit of the calcium-regulated non-lysosomal thiol-protease which catalyzes limited proteolysis of substrates involved in cytoskeletal remodeling and signal transduction. Essential for embryonic development (By similarity).</text>
</comment>
<comment type="subunit">
    <text evidence="1">Homodimer or heterodimer of a large (catalytic) and a small (regulatory) subunit. In presence of calcium, the heterodimer dissociates (By similarity).</text>
</comment>
<comment type="subcellular location">
    <subcellularLocation>
        <location evidence="1">Cytoplasm</location>
    </subcellularLocation>
    <subcellularLocation>
        <location evidence="1">Cell membrane</location>
    </subcellularLocation>
    <text evidence="1">Translocates to the plasma membrane upon calcium binding.</text>
</comment>
<comment type="domain">
    <text evidence="1">The contact of the 5th EF-hand domain from each monomer allows the formation of the homodimer and also appears to mediate the contact between the large catalytic subunit and small regulatory subunit for the formation of the heterodimer.</text>
</comment>
<comment type="domain">
    <text>EF-hand domains are paired. EF-hand 1 is paired with EF-hand 2 and EF-hand 3 is paired with EF-hand 4. The fifth EF-hand domain, left unpaired, does not bind the calcium but is responsible of the dimerization by EF-embrace. The first four EF-hand domains bind calcium, however it is not sure if the binding of EF-hand 4 to calcium is physiologically relevant.</text>
</comment>
<feature type="chain" id="PRO_0000073712" description="Calpain small subunit 1">
    <location>
        <begin position="1"/>
        <end position="263"/>
    </location>
</feature>
<feature type="domain" description="EF-hand 1; atypical" evidence="6">
    <location>
        <begin position="91"/>
        <end position="125"/>
    </location>
</feature>
<feature type="domain" description="EF-hand 2" evidence="5">
    <location>
        <begin position="134"/>
        <end position="167"/>
    </location>
</feature>
<feature type="domain" description="EF-hand 3" evidence="5">
    <location>
        <begin position="164"/>
        <end position="199"/>
    </location>
</feature>
<feature type="domain" description="EF-hand 4" evidence="6">
    <location>
        <begin position="200"/>
        <end position="228"/>
    </location>
</feature>
<feature type="domain" description="EF-hand 5" evidence="5">
    <location>
        <begin position="229"/>
        <end position="263"/>
    </location>
</feature>
<feature type="binding site" evidence="4">
    <location>
        <position position="104"/>
    </location>
    <ligand>
        <name>Ca(2+)</name>
        <dbReference type="ChEBI" id="CHEBI:29108"/>
        <label>1</label>
    </ligand>
</feature>
<feature type="binding site" evidence="4">
    <location>
        <position position="107"/>
    </location>
    <ligand>
        <name>Ca(2+)</name>
        <dbReference type="ChEBI" id="CHEBI:29108"/>
        <label>1</label>
    </ligand>
</feature>
<feature type="binding site" evidence="4">
    <location>
        <position position="109"/>
    </location>
    <ligand>
        <name>Ca(2+)</name>
        <dbReference type="ChEBI" id="CHEBI:29108"/>
        <label>1</label>
    </ligand>
</feature>
<feature type="binding site" evidence="4">
    <location>
        <position position="114"/>
    </location>
    <ligand>
        <name>Ca(2+)</name>
        <dbReference type="ChEBI" id="CHEBI:29108"/>
        <label>1</label>
    </ligand>
</feature>
<feature type="binding site" evidence="4">
    <location>
        <position position="132"/>
    </location>
    <ligand>
        <name>Ca(2+)</name>
        <dbReference type="ChEBI" id="CHEBI:29108"/>
        <label>4</label>
    </ligand>
</feature>
<feature type="binding site" evidence="5">
    <location>
        <position position="147"/>
    </location>
    <ligand>
        <name>Ca(2+)</name>
        <dbReference type="ChEBI" id="CHEBI:29108"/>
        <label>2</label>
    </ligand>
</feature>
<feature type="binding site" evidence="5">
    <location>
        <position position="149"/>
    </location>
    <ligand>
        <name>Ca(2+)</name>
        <dbReference type="ChEBI" id="CHEBI:29108"/>
        <label>2</label>
    </ligand>
</feature>
<feature type="binding site" evidence="4 5">
    <location>
        <position position="151"/>
    </location>
    <ligand>
        <name>Ca(2+)</name>
        <dbReference type="ChEBI" id="CHEBI:29108"/>
        <label>2</label>
    </ligand>
</feature>
<feature type="binding site" evidence="4 5">
    <location>
        <position position="153"/>
    </location>
    <ligand>
        <name>Ca(2+)</name>
        <dbReference type="ChEBI" id="CHEBI:29108"/>
        <label>2</label>
    </ligand>
</feature>
<feature type="binding site" evidence="5">
    <location>
        <position position="158"/>
    </location>
    <ligand>
        <name>Ca(2+)</name>
        <dbReference type="ChEBI" id="CHEBI:29108"/>
        <label>2</label>
    </ligand>
</feature>
<feature type="binding site" evidence="5">
    <location>
        <position position="177"/>
    </location>
    <ligand>
        <name>Ca(2+)</name>
        <dbReference type="ChEBI" id="CHEBI:29108"/>
        <label>3</label>
    </ligand>
</feature>
<feature type="binding site" evidence="5">
    <location>
        <position position="179"/>
    </location>
    <ligand>
        <name>Ca(2+)</name>
        <dbReference type="ChEBI" id="CHEBI:29108"/>
        <label>3</label>
    </ligand>
</feature>
<feature type="binding site" evidence="4 5">
    <location>
        <position position="181"/>
    </location>
    <ligand>
        <name>Ca(2+)</name>
        <dbReference type="ChEBI" id="CHEBI:29108"/>
        <label>3</label>
    </ligand>
</feature>
<feature type="binding site" evidence="4 5">
    <location>
        <position position="183"/>
    </location>
    <ligand>
        <name>Ca(2+)</name>
        <dbReference type="ChEBI" id="CHEBI:29108"/>
        <label>3</label>
    </ligand>
</feature>
<feature type="binding site" evidence="5">
    <location>
        <position position="188"/>
    </location>
    <ligand>
        <name>Ca(2+)</name>
        <dbReference type="ChEBI" id="CHEBI:29108"/>
        <label>3</label>
    </ligand>
</feature>
<feature type="binding site" evidence="4">
    <location>
        <position position="220"/>
    </location>
    <ligand>
        <name>Ca(2+)</name>
        <dbReference type="ChEBI" id="CHEBI:29108"/>
        <label>4</label>
    </ligand>
</feature>
<feature type="modified residue" description="N-acetylmethionine" evidence="3">
    <location>
        <position position="1"/>
    </location>
</feature>
<feature type="modified residue" description="Phosphoserine" evidence="3">
    <location>
        <position position="6"/>
    </location>
</feature>
<feature type="modified residue" description="N6-acetyllysine" evidence="3">
    <location>
        <position position="174"/>
    </location>
</feature>
<sequence>MFLVNSFLKGGGGGGGGGGLGGGLGNVLGGLISGAGGGGGGGGGGGGGGGGTAMRILGGVISAISEAAAQYNPEPVPPRTHYSNIEANESEEVRQFRRLFAQLAGDDMEVSATELMNILNKVVTRHPDLKTDGFGIDTCRSMVAVMDSDTTGKLGFEEFKYLWNNIKKWQAVYKQFDVDRSGTIGSSELPGAFEAAGFRLNEHLYNMIIRRYSDEGGNMDFDNFISCLVRLDAMFRAFKSLDKDGTGQIQVNIQEWLQLTMYS</sequence>
<evidence type="ECO:0000250" key="1"/>
<evidence type="ECO:0000250" key="2">
    <source>
        <dbReference type="UniProtKB" id="O88456"/>
    </source>
</evidence>
<evidence type="ECO:0000250" key="3">
    <source>
        <dbReference type="UniProtKB" id="P04632"/>
    </source>
</evidence>
<evidence type="ECO:0000250" key="4">
    <source>
        <dbReference type="UniProtKB" id="Q64537"/>
    </source>
</evidence>
<evidence type="ECO:0000255" key="5">
    <source>
        <dbReference type="PROSITE-ProRule" id="PRU00448"/>
    </source>
</evidence>
<evidence type="ECO:0000305" key="6"/>
<name>CPNS1_BOVIN</name>
<organism>
    <name type="scientific">Bos taurus</name>
    <name type="common">Bovine</name>
    <dbReference type="NCBI Taxonomy" id="9913"/>
    <lineage>
        <taxon>Eukaryota</taxon>
        <taxon>Metazoa</taxon>
        <taxon>Chordata</taxon>
        <taxon>Craniata</taxon>
        <taxon>Vertebrata</taxon>
        <taxon>Euteleostomi</taxon>
        <taxon>Mammalia</taxon>
        <taxon>Eutheria</taxon>
        <taxon>Laurasiatheria</taxon>
        <taxon>Artiodactyla</taxon>
        <taxon>Ruminantia</taxon>
        <taxon>Pecora</taxon>
        <taxon>Bovidae</taxon>
        <taxon>Bovinae</taxon>
        <taxon>Bos</taxon>
    </lineage>
</organism>
<proteinExistence type="evidence at transcript level"/>